<accession>Q8Y5M0</accession>
<comment type="function">
    <text evidence="1">Catalyzes the initial step of the lipid cycle reactions in the biosynthesis of the cell wall peptidoglycan: transfers peptidoglycan precursor phospho-MurNAc-pentapeptide from UDP-MurNAc-pentapeptide onto the lipid carrier undecaprenyl phosphate, yielding undecaprenyl-pyrophosphoryl-MurNAc-pentapeptide, known as lipid I.</text>
</comment>
<comment type="catalytic activity">
    <reaction evidence="1">
        <text>UDP-N-acetyl-alpha-D-muramoyl-L-alanyl-gamma-D-glutamyl-meso-2,6-diaminopimeloyl-D-alanyl-D-alanine + di-trans,octa-cis-undecaprenyl phosphate = di-trans,octa-cis-undecaprenyl diphospho-N-acetyl-alpha-D-muramoyl-L-alanyl-D-glutamyl-meso-2,6-diaminopimeloyl-D-alanyl-D-alanine + UMP</text>
        <dbReference type="Rhea" id="RHEA:28386"/>
        <dbReference type="ChEBI" id="CHEBI:57865"/>
        <dbReference type="ChEBI" id="CHEBI:60392"/>
        <dbReference type="ChEBI" id="CHEBI:61386"/>
        <dbReference type="ChEBI" id="CHEBI:61387"/>
        <dbReference type="EC" id="2.7.8.13"/>
    </reaction>
</comment>
<comment type="cofactor">
    <cofactor evidence="1">
        <name>Mg(2+)</name>
        <dbReference type="ChEBI" id="CHEBI:18420"/>
    </cofactor>
</comment>
<comment type="pathway">
    <text evidence="1">Cell wall biogenesis; peptidoglycan biosynthesis.</text>
</comment>
<comment type="subcellular location">
    <subcellularLocation>
        <location evidence="1">Cell membrane</location>
        <topology evidence="1">Multi-pass membrane protein</topology>
    </subcellularLocation>
</comment>
<comment type="similarity">
    <text evidence="1">Belongs to the glycosyltransferase 4 family. MraY subfamily.</text>
</comment>
<feature type="chain" id="PRO_0000108850" description="Phospho-N-acetylmuramoyl-pentapeptide-transferase">
    <location>
        <begin position="1"/>
        <end position="324"/>
    </location>
</feature>
<feature type="transmembrane region" description="Helical" evidence="1">
    <location>
        <begin position="9"/>
        <end position="29"/>
    </location>
</feature>
<feature type="transmembrane region" description="Helical" evidence="1">
    <location>
        <begin position="53"/>
        <end position="73"/>
    </location>
</feature>
<feature type="transmembrane region" description="Helical" evidence="1">
    <location>
        <begin position="77"/>
        <end position="97"/>
    </location>
</feature>
<feature type="transmembrane region" description="Helical" evidence="1">
    <location>
        <begin position="117"/>
        <end position="137"/>
    </location>
</feature>
<feature type="transmembrane region" description="Helical" evidence="1">
    <location>
        <begin position="147"/>
        <end position="167"/>
    </location>
</feature>
<feature type="transmembrane region" description="Helical" evidence="1">
    <location>
        <begin position="176"/>
        <end position="196"/>
    </location>
</feature>
<feature type="transmembrane region" description="Helical" evidence="1">
    <location>
        <begin position="201"/>
        <end position="221"/>
    </location>
</feature>
<feature type="transmembrane region" description="Helical" evidence="1">
    <location>
        <begin position="227"/>
        <end position="247"/>
    </location>
</feature>
<feature type="transmembrane region" description="Helical" evidence="1">
    <location>
        <begin position="253"/>
        <end position="273"/>
    </location>
</feature>
<feature type="transmembrane region" description="Helical" evidence="1">
    <location>
        <begin position="304"/>
        <end position="324"/>
    </location>
</feature>
<name>MRAY_LISMO</name>
<evidence type="ECO:0000255" key="1">
    <source>
        <dbReference type="HAMAP-Rule" id="MF_00038"/>
    </source>
</evidence>
<organism>
    <name type="scientific">Listeria monocytogenes serovar 1/2a (strain ATCC BAA-679 / EGD-e)</name>
    <dbReference type="NCBI Taxonomy" id="169963"/>
    <lineage>
        <taxon>Bacteria</taxon>
        <taxon>Bacillati</taxon>
        <taxon>Bacillota</taxon>
        <taxon>Bacilli</taxon>
        <taxon>Bacillales</taxon>
        <taxon>Listeriaceae</taxon>
        <taxon>Listeria</taxon>
    </lineage>
</organism>
<protein>
    <recommendedName>
        <fullName evidence="1">Phospho-N-acetylmuramoyl-pentapeptide-transferase</fullName>
        <ecNumber evidence="1">2.7.8.13</ecNumber>
    </recommendedName>
    <alternativeName>
        <fullName evidence="1">UDP-MurNAc-pentapeptide phosphotransferase</fullName>
    </alternativeName>
</protein>
<keyword id="KW-0131">Cell cycle</keyword>
<keyword id="KW-0132">Cell division</keyword>
<keyword id="KW-1003">Cell membrane</keyword>
<keyword id="KW-0133">Cell shape</keyword>
<keyword id="KW-0961">Cell wall biogenesis/degradation</keyword>
<keyword id="KW-0460">Magnesium</keyword>
<keyword id="KW-0472">Membrane</keyword>
<keyword id="KW-0479">Metal-binding</keyword>
<keyword id="KW-0573">Peptidoglycan synthesis</keyword>
<keyword id="KW-1185">Reference proteome</keyword>
<keyword id="KW-0808">Transferase</keyword>
<keyword id="KW-0812">Transmembrane</keyword>
<keyword id="KW-1133">Transmembrane helix</keyword>
<dbReference type="EC" id="2.7.8.13" evidence="1"/>
<dbReference type="EMBL" id="AL591982">
    <property type="protein sequence ID" value="CAD00115.1"/>
    <property type="molecule type" value="Genomic_DNA"/>
</dbReference>
<dbReference type="PIR" id="AE1329">
    <property type="entry name" value="AE1329"/>
</dbReference>
<dbReference type="RefSeq" id="NP_465561.1">
    <property type="nucleotide sequence ID" value="NC_003210.1"/>
</dbReference>
<dbReference type="RefSeq" id="WP_003731978.1">
    <property type="nucleotide sequence ID" value="NZ_CP149495.1"/>
</dbReference>
<dbReference type="SMR" id="Q8Y5M0"/>
<dbReference type="STRING" id="169963.gene:17594722"/>
<dbReference type="PaxDb" id="169963-lmo2037"/>
<dbReference type="DNASU" id="984374"/>
<dbReference type="EnsemblBacteria" id="CAD00115">
    <property type="protein sequence ID" value="CAD00115"/>
    <property type="gene ID" value="CAD00115"/>
</dbReference>
<dbReference type="GeneID" id="984374"/>
<dbReference type="KEGG" id="lmo:lmo2037"/>
<dbReference type="PATRIC" id="fig|169963.11.peg.2085"/>
<dbReference type="eggNOG" id="COG0472">
    <property type="taxonomic scope" value="Bacteria"/>
</dbReference>
<dbReference type="HOGENOM" id="CLU_023982_0_1_9"/>
<dbReference type="OrthoDB" id="9805475at2"/>
<dbReference type="PhylomeDB" id="Q8Y5M0"/>
<dbReference type="BioCyc" id="LMON169963:LMO2037-MONOMER"/>
<dbReference type="UniPathway" id="UPA00219"/>
<dbReference type="Proteomes" id="UP000000817">
    <property type="component" value="Chromosome"/>
</dbReference>
<dbReference type="GO" id="GO:0005886">
    <property type="term" value="C:plasma membrane"/>
    <property type="evidence" value="ECO:0000318"/>
    <property type="project" value="GO_Central"/>
</dbReference>
<dbReference type="GO" id="GO:0046872">
    <property type="term" value="F:metal ion binding"/>
    <property type="evidence" value="ECO:0007669"/>
    <property type="project" value="UniProtKB-KW"/>
</dbReference>
<dbReference type="GO" id="GO:0008963">
    <property type="term" value="F:phospho-N-acetylmuramoyl-pentapeptide-transferase activity"/>
    <property type="evidence" value="ECO:0007669"/>
    <property type="project" value="UniProtKB-UniRule"/>
</dbReference>
<dbReference type="GO" id="GO:0016780">
    <property type="term" value="F:phosphotransferase activity, for other substituted phosphate groups"/>
    <property type="evidence" value="ECO:0000318"/>
    <property type="project" value="GO_Central"/>
</dbReference>
<dbReference type="GO" id="GO:0051992">
    <property type="term" value="F:UDP-N-acetylmuramoyl-L-alanyl-D-glutamyl-meso-2,6-diaminopimelyl-D-alanyl-D-alanine:undecaprenyl-phosphate transferase activity"/>
    <property type="evidence" value="ECO:0007669"/>
    <property type="project" value="RHEA"/>
</dbReference>
<dbReference type="GO" id="GO:0051301">
    <property type="term" value="P:cell division"/>
    <property type="evidence" value="ECO:0007669"/>
    <property type="project" value="UniProtKB-KW"/>
</dbReference>
<dbReference type="GO" id="GO:0044038">
    <property type="term" value="P:cell wall macromolecule biosynthetic process"/>
    <property type="evidence" value="ECO:0000318"/>
    <property type="project" value="GO_Central"/>
</dbReference>
<dbReference type="GO" id="GO:0071555">
    <property type="term" value="P:cell wall organization"/>
    <property type="evidence" value="ECO:0000318"/>
    <property type="project" value="GO_Central"/>
</dbReference>
<dbReference type="GO" id="GO:0009252">
    <property type="term" value="P:peptidoglycan biosynthetic process"/>
    <property type="evidence" value="ECO:0007669"/>
    <property type="project" value="UniProtKB-UniRule"/>
</dbReference>
<dbReference type="GO" id="GO:0008360">
    <property type="term" value="P:regulation of cell shape"/>
    <property type="evidence" value="ECO:0007669"/>
    <property type="project" value="UniProtKB-KW"/>
</dbReference>
<dbReference type="CDD" id="cd06852">
    <property type="entry name" value="GT_MraY"/>
    <property type="match status" value="1"/>
</dbReference>
<dbReference type="HAMAP" id="MF_00038">
    <property type="entry name" value="MraY"/>
    <property type="match status" value="1"/>
</dbReference>
<dbReference type="InterPro" id="IPR000715">
    <property type="entry name" value="Glycosyl_transferase_4"/>
</dbReference>
<dbReference type="InterPro" id="IPR003524">
    <property type="entry name" value="PNAcMuramoyl-5peptid_Trfase"/>
</dbReference>
<dbReference type="InterPro" id="IPR018480">
    <property type="entry name" value="PNAcMuramoyl-5peptid_Trfase_CS"/>
</dbReference>
<dbReference type="NCBIfam" id="TIGR00445">
    <property type="entry name" value="mraY"/>
    <property type="match status" value="1"/>
</dbReference>
<dbReference type="PANTHER" id="PTHR22926">
    <property type="entry name" value="PHOSPHO-N-ACETYLMURAMOYL-PENTAPEPTIDE-TRANSFERASE"/>
    <property type="match status" value="1"/>
</dbReference>
<dbReference type="PANTHER" id="PTHR22926:SF5">
    <property type="entry name" value="PHOSPHO-N-ACETYLMURAMOYL-PENTAPEPTIDE-TRANSFERASE HOMOLOG"/>
    <property type="match status" value="1"/>
</dbReference>
<dbReference type="Pfam" id="PF00953">
    <property type="entry name" value="Glycos_transf_4"/>
    <property type="match status" value="1"/>
</dbReference>
<dbReference type="PROSITE" id="PS01348">
    <property type="entry name" value="MRAY_2"/>
    <property type="match status" value="1"/>
</dbReference>
<sequence>MSLYMLVSTFAVAFIITVIGVPLFIPFLVKLKFGQSIRDEGPKMHEKKSGTPTMGAVVFITAMLISFLVFSFISGEVSAATWLLFIALALFGALGFLDDYIKVVQKRNLGLTSKQKFLGQVVISILFYLVYHFNDFAETLNIPFTNIEVDLGWFFVIFILFWLVGFSNAVNLTDGLDGLVSGLSVIAFSAFGVIAFYQEQMDVAIFCFAIVGGMLGFLLFNKNPAKIFMGDTGSLALGGSIAAISILVHQEWLLLLIGIIFVIETASVILQVFYFKATGGKRIFRMTPIHHHFELGGWSEWRVVLTFWGIGLVGAIISVCVVIF</sequence>
<reference key="1">
    <citation type="journal article" date="2001" name="Science">
        <title>Comparative genomics of Listeria species.</title>
        <authorList>
            <person name="Glaser P."/>
            <person name="Frangeul L."/>
            <person name="Buchrieser C."/>
            <person name="Rusniok C."/>
            <person name="Amend A."/>
            <person name="Baquero F."/>
            <person name="Berche P."/>
            <person name="Bloecker H."/>
            <person name="Brandt P."/>
            <person name="Chakraborty T."/>
            <person name="Charbit A."/>
            <person name="Chetouani F."/>
            <person name="Couve E."/>
            <person name="de Daruvar A."/>
            <person name="Dehoux P."/>
            <person name="Domann E."/>
            <person name="Dominguez-Bernal G."/>
            <person name="Duchaud E."/>
            <person name="Durant L."/>
            <person name="Dussurget O."/>
            <person name="Entian K.-D."/>
            <person name="Fsihi H."/>
            <person name="Garcia-del Portillo F."/>
            <person name="Garrido P."/>
            <person name="Gautier L."/>
            <person name="Goebel W."/>
            <person name="Gomez-Lopez N."/>
            <person name="Hain T."/>
            <person name="Hauf J."/>
            <person name="Jackson D."/>
            <person name="Jones L.-M."/>
            <person name="Kaerst U."/>
            <person name="Kreft J."/>
            <person name="Kuhn M."/>
            <person name="Kunst F."/>
            <person name="Kurapkat G."/>
            <person name="Madueno E."/>
            <person name="Maitournam A."/>
            <person name="Mata Vicente J."/>
            <person name="Ng E."/>
            <person name="Nedjari H."/>
            <person name="Nordsiek G."/>
            <person name="Novella S."/>
            <person name="de Pablos B."/>
            <person name="Perez-Diaz J.-C."/>
            <person name="Purcell R."/>
            <person name="Remmel B."/>
            <person name="Rose M."/>
            <person name="Schlueter T."/>
            <person name="Simoes N."/>
            <person name="Tierrez A."/>
            <person name="Vazquez-Boland J.-A."/>
            <person name="Voss H."/>
            <person name="Wehland J."/>
            <person name="Cossart P."/>
        </authorList>
    </citation>
    <scope>NUCLEOTIDE SEQUENCE [LARGE SCALE GENOMIC DNA]</scope>
    <source>
        <strain>ATCC BAA-679 / EGD-e</strain>
    </source>
</reference>
<proteinExistence type="inferred from homology"/>
<gene>
    <name evidence="1" type="primary">mraY</name>
    <name type="ordered locus">lmo2037</name>
</gene>